<sequence length="80" mass="8964">MSNKGQLLQDPFLNALRKEHVPVSIYLVNGIKLQGNIESFDQYVVLLRNTVTQMVYKHAISTVVPARPVNFHPDAEATTS</sequence>
<proteinExistence type="inferred from homology"/>
<feature type="chain" id="PRO_1000025893" description="RNA-binding protein Hfq">
    <location>
        <begin position="1"/>
        <end position="80"/>
    </location>
</feature>
<feature type="domain" description="Sm" evidence="2">
    <location>
        <begin position="10"/>
        <end position="69"/>
    </location>
</feature>
<reference key="1">
    <citation type="submission" date="2006-08" db="EMBL/GenBank/DDBJ databases">
        <title>Complete sequence of chromosome 1 of Burkholderia cepacia AMMD.</title>
        <authorList>
            <person name="Copeland A."/>
            <person name="Lucas S."/>
            <person name="Lapidus A."/>
            <person name="Barry K."/>
            <person name="Detter J.C."/>
            <person name="Glavina del Rio T."/>
            <person name="Hammon N."/>
            <person name="Israni S."/>
            <person name="Pitluck S."/>
            <person name="Bruce D."/>
            <person name="Chain P."/>
            <person name="Malfatti S."/>
            <person name="Shin M."/>
            <person name="Vergez L."/>
            <person name="Schmutz J."/>
            <person name="Larimer F."/>
            <person name="Land M."/>
            <person name="Hauser L."/>
            <person name="Kyrpides N."/>
            <person name="Kim E."/>
            <person name="Parke J."/>
            <person name="Coenye T."/>
            <person name="Konstantinidis K."/>
            <person name="Ramette A."/>
            <person name="Tiedje J."/>
            <person name="Richardson P."/>
        </authorList>
    </citation>
    <scope>NUCLEOTIDE SEQUENCE [LARGE SCALE GENOMIC DNA]</scope>
    <source>
        <strain>ATCC BAA-244 / DSM 16087 / CCUG 44356 / LMG 19182 / AMMD</strain>
    </source>
</reference>
<gene>
    <name evidence="1" type="primary">hfq</name>
    <name type="ordered locus">Bamb_1745</name>
</gene>
<protein>
    <recommendedName>
        <fullName evidence="1">RNA-binding protein Hfq</fullName>
    </recommendedName>
</protein>
<comment type="function">
    <text evidence="1">RNA chaperone that binds small regulatory RNA (sRNAs) and mRNAs to facilitate mRNA translational regulation in response to envelope stress, environmental stress and changes in metabolite concentrations. Also binds with high specificity to tRNAs.</text>
</comment>
<comment type="subunit">
    <text evidence="1">Homohexamer.</text>
</comment>
<comment type="similarity">
    <text evidence="1">Belongs to the Hfq family.</text>
</comment>
<accession>Q0BEX2</accession>
<organism>
    <name type="scientific">Burkholderia ambifaria (strain ATCC BAA-244 / DSM 16087 / CCUG 44356 / LMG 19182 / AMMD)</name>
    <name type="common">Burkholderia cepacia (strain AMMD)</name>
    <dbReference type="NCBI Taxonomy" id="339670"/>
    <lineage>
        <taxon>Bacteria</taxon>
        <taxon>Pseudomonadati</taxon>
        <taxon>Pseudomonadota</taxon>
        <taxon>Betaproteobacteria</taxon>
        <taxon>Burkholderiales</taxon>
        <taxon>Burkholderiaceae</taxon>
        <taxon>Burkholderia</taxon>
        <taxon>Burkholderia cepacia complex</taxon>
    </lineage>
</organism>
<evidence type="ECO:0000255" key="1">
    <source>
        <dbReference type="HAMAP-Rule" id="MF_00436"/>
    </source>
</evidence>
<evidence type="ECO:0000255" key="2">
    <source>
        <dbReference type="PROSITE-ProRule" id="PRU01346"/>
    </source>
</evidence>
<keyword id="KW-0694">RNA-binding</keyword>
<keyword id="KW-0346">Stress response</keyword>
<dbReference type="EMBL" id="CP000440">
    <property type="protein sequence ID" value="ABI87301.1"/>
    <property type="molecule type" value="Genomic_DNA"/>
</dbReference>
<dbReference type="RefSeq" id="WP_006754897.1">
    <property type="nucleotide sequence ID" value="NZ_CP009798.1"/>
</dbReference>
<dbReference type="SMR" id="Q0BEX2"/>
<dbReference type="GeneID" id="93086048"/>
<dbReference type="KEGG" id="bam:Bamb_1745"/>
<dbReference type="PATRIC" id="fig|339670.21.peg.3216"/>
<dbReference type="eggNOG" id="COG1923">
    <property type="taxonomic scope" value="Bacteria"/>
</dbReference>
<dbReference type="Proteomes" id="UP000000662">
    <property type="component" value="Chromosome 1"/>
</dbReference>
<dbReference type="GO" id="GO:0005829">
    <property type="term" value="C:cytosol"/>
    <property type="evidence" value="ECO:0007669"/>
    <property type="project" value="TreeGrafter"/>
</dbReference>
<dbReference type="GO" id="GO:0003723">
    <property type="term" value="F:RNA binding"/>
    <property type="evidence" value="ECO:0007669"/>
    <property type="project" value="UniProtKB-UniRule"/>
</dbReference>
<dbReference type="GO" id="GO:0006355">
    <property type="term" value="P:regulation of DNA-templated transcription"/>
    <property type="evidence" value="ECO:0007669"/>
    <property type="project" value="InterPro"/>
</dbReference>
<dbReference type="GO" id="GO:0043487">
    <property type="term" value="P:regulation of RNA stability"/>
    <property type="evidence" value="ECO:0007669"/>
    <property type="project" value="TreeGrafter"/>
</dbReference>
<dbReference type="GO" id="GO:0045974">
    <property type="term" value="P:regulation of translation, ncRNA-mediated"/>
    <property type="evidence" value="ECO:0007669"/>
    <property type="project" value="TreeGrafter"/>
</dbReference>
<dbReference type="CDD" id="cd01716">
    <property type="entry name" value="Hfq"/>
    <property type="match status" value="1"/>
</dbReference>
<dbReference type="FunFam" id="2.30.30.100:FF:000001">
    <property type="entry name" value="RNA-binding protein Hfq"/>
    <property type="match status" value="1"/>
</dbReference>
<dbReference type="Gene3D" id="2.30.30.100">
    <property type="match status" value="1"/>
</dbReference>
<dbReference type="HAMAP" id="MF_00436">
    <property type="entry name" value="Hfq"/>
    <property type="match status" value="1"/>
</dbReference>
<dbReference type="InterPro" id="IPR005001">
    <property type="entry name" value="Hfq"/>
</dbReference>
<dbReference type="InterPro" id="IPR010920">
    <property type="entry name" value="LSM_dom_sf"/>
</dbReference>
<dbReference type="InterPro" id="IPR047575">
    <property type="entry name" value="Sm"/>
</dbReference>
<dbReference type="NCBIfam" id="TIGR02383">
    <property type="entry name" value="Hfq"/>
    <property type="match status" value="1"/>
</dbReference>
<dbReference type="NCBIfam" id="NF001602">
    <property type="entry name" value="PRK00395.1"/>
    <property type="match status" value="1"/>
</dbReference>
<dbReference type="PANTHER" id="PTHR34772">
    <property type="entry name" value="RNA-BINDING PROTEIN HFQ"/>
    <property type="match status" value="1"/>
</dbReference>
<dbReference type="PANTHER" id="PTHR34772:SF1">
    <property type="entry name" value="RNA-BINDING PROTEIN HFQ"/>
    <property type="match status" value="1"/>
</dbReference>
<dbReference type="Pfam" id="PF17209">
    <property type="entry name" value="Hfq"/>
    <property type="match status" value="1"/>
</dbReference>
<dbReference type="SUPFAM" id="SSF50182">
    <property type="entry name" value="Sm-like ribonucleoproteins"/>
    <property type="match status" value="1"/>
</dbReference>
<dbReference type="PROSITE" id="PS52002">
    <property type="entry name" value="SM"/>
    <property type="match status" value="1"/>
</dbReference>
<name>HFQ_BURCM</name>